<reference key="1">
    <citation type="journal article" date="2004" name="Nat. Genet.">
        <title>Evidence in the Legionella pneumophila genome for exploitation of host cell functions and high genome plasticity.</title>
        <authorList>
            <person name="Cazalet C."/>
            <person name="Rusniok C."/>
            <person name="Brueggemann H."/>
            <person name="Zidane N."/>
            <person name="Magnier A."/>
            <person name="Ma L."/>
            <person name="Tichit M."/>
            <person name="Jarraud S."/>
            <person name="Bouchier C."/>
            <person name="Vandenesch F."/>
            <person name="Kunst F."/>
            <person name="Etienne J."/>
            <person name="Glaser P."/>
            <person name="Buchrieser C."/>
        </authorList>
    </citation>
    <scope>NUCLEOTIDE SEQUENCE [LARGE SCALE GENOMIC DNA]</scope>
    <source>
        <strain>Paris</strain>
    </source>
</reference>
<gene>
    <name evidence="1" type="primary">gcvT</name>
    <name type="ordered locus">lpp0132</name>
</gene>
<comment type="function">
    <text evidence="1">The glycine cleavage system catalyzes the degradation of glycine.</text>
</comment>
<comment type="catalytic activity">
    <reaction evidence="1">
        <text>N(6)-[(R)-S(8)-aminomethyldihydrolipoyl]-L-lysyl-[protein] + (6S)-5,6,7,8-tetrahydrofolate = N(6)-[(R)-dihydrolipoyl]-L-lysyl-[protein] + (6R)-5,10-methylene-5,6,7,8-tetrahydrofolate + NH4(+)</text>
        <dbReference type="Rhea" id="RHEA:16945"/>
        <dbReference type="Rhea" id="RHEA-COMP:10475"/>
        <dbReference type="Rhea" id="RHEA-COMP:10492"/>
        <dbReference type="ChEBI" id="CHEBI:15636"/>
        <dbReference type="ChEBI" id="CHEBI:28938"/>
        <dbReference type="ChEBI" id="CHEBI:57453"/>
        <dbReference type="ChEBI" id="CHEBI:83100"/>
        <dbReference type="ChEBI" id="CHEBI:83143"/>
        <dbReference type="EC" id="2.1.2.10"/>
    </reaction>
</comment>
<comment type="subunit">
    <text evidence="1">The glycine cleavage system is composed of four proteins: P, T, L and H.</text>
</comment>
<comment type="similarity">
    <text evidence="1">Belongs to the GcvT family.</text>
</comment>
<protein>
    <recommendedName>
        <fullName evidence="1">Aminomethyltransferase</fullName>
        <ecNumber evidence="1">2.1.2.10</ecNumber>
    </recommendedName>
    <alternativeName>
        <fullName evidence="1">Glycine cleavage system T protein</fullName>
    </alternativeName>
</protein>
<keyword id="KW-0032">Aminotransferase</keyword>
<keyword id="KW-0808">Transferase</keyword>
<name>GCST_LEGPA</name>
<dbReference type="EC" id="2.1.2.10" evidence="1"/>
<dbReference type="EMBL" id="CR628336">
    <property type="protein sequence ID" value="CAH11280.1"/>
    <property type="molecule type" value="Genomic_DNA"/>
</dbReference>
<dbReference type="RefSeq" id="WP_011212769.1">
    <property type="nucleotide sequence ID" value="NC_006368.1"/>
</dbReference>
<dbReference type="SMR" id="Q5X8W1"/>
<dbReference type="KEGG" id="lpp:lpp0132"/>
<dbReference type="LegioList" id="lpp0132"/>
<dbReference type="HOGENOM" id="CLU_007884_10_2_6"/>
<dbReference type="GO" id="GO:0005829">
    <property type="term" value="C:cytosol"/>
    <property type="evidence" value="ECO:0007669"/>
    <property type="project" value="TreeGrafter"/>
</dbReference>
<dbReference type="GO" id="GO:0005960">
    <property type="term" value="C:glycine cleavage complex"/>
    <property type="evidence" value="ECO:0007669"/>
    <property type="project" value="InterPro"/>
</dbReference>
<dbReference type="GO" id="GO:0004047">
    <property type="term" value="F:aminomethyltransferase activity"/>
    <property type="evidence" value="ECO:0007669"/>
    <property type="project" value="UniProtKB-UniRule"/>
</dbReference>
<dbReference type="GO" id="GO:0008483">
    <property type="term" value="F:transaminase activity"/>
    <property type="evidence" value="ECO:0007669"/>
    <property type="project" value="UniProtKB-KW"/>
</dbReference>
<dbReference type="GO" id="GO:0019464">
    <property type="term" value="P:glycine decarboxylation via glycine cleavage system"/>
    <property type="evidence" value="ECO:0007669"/>
    <property type="project" value="UniProtKB-UniRule"/>
</dbReference>
<dbReference type="FunFam" id="3.30.70.1400:FF:000001">
    <property type="entry name" value="Aminomethyltransferase"/>
    <property type="match status" value="1"/>
</dbReference>
<dbReference type="FunFam" id="4.10.1250.10:FF:000001">
    <property type="entry name" value="Aminomethyltransferase"/>
    <property type="match status" value="1"/>
</dbReference>
<dbReference type="Gene3D" id="2.40.30.110">
    <property type="entry name" value="Aminomethyltransferase beta-barrel domains"/>
    <property type="match status" value="1"/>
</dbReference>
<dbReference type="Gene3D" id="3.30.70.1400">
    <property type="entry name" value="Aminomethyltransferase beta-barrel domains"/>
    <property type="match status" value="1"/>
</dbReference>
<dbReference type="Gene3D" id="4.10.1250.10">
    <property type="entry name" value="Aminomethyltransferase fragment"/>
    <property type="match status" value="1"/>
</dbReference>
<dbReference type="Gene3D" id="3.30.1360.120">
    <property type="entry name" value="Probable tRNA modification gtpase trme, domain 1"/>
    <property type="match status" value="1"/>
</dbReference>
<dbReference type="HAMAP" id="MF_00259">
    <property type="entry name" value="GcvT"/>
    <property type="match status" value="1"/>
</dbReference>
<dbReference type="InterPro" id="IPR006223">
    <property type="entry name" value="GCS_T"/>
</dbReference>
<dbReference type="InterPro" id="IPR022903">
    <property type="entry name" value="GCS_T_bac"/>
</dbReference>
<dbReference type="InterPro" id="IPR013977">
    <property type="entry name" value="GCST_C"/>
</dbReference>
<dbReference type="InterPro" id="IPR006222">
    <property type="entry name" value="GCV_T_N"/>
</dbReference>
<dbReference type="InterPro" id="IPR028896">
    <property type="entry name" value="GcvT/YgfZ/DmdA"/>
</dbReference>
<dbReference type="InterPro" id="IPR029043">
    <property type="entry name" value="GcvT/YgfZ_C"/>
</dbReference>
<dbReference type="InterPro" id="IPR027266">
    <property type="entry name" value="TrmE/GcvT_dom1"/>
</dbReference>
<dbReference type="NCBIfam" id="TIGR00528">
    <property type="entry name" value="gcvT"/>
    <property type="match status" value="1"/>
</dbReference>
<dbReference type="NCBIfam" id="NF001567">
    <property type="entry name" value="PRK00389.1"/>
    <property type="match status" value="1"/>
</dbReference>
<dbReference type="PANTHER" id="PTHR43757">
    <property type="entry name" value="AMINOMETHYLTRANSFERASE"/>
    <property type="match status" value="1"/>
</dbReference>
<dbReference type="PANTHER" id="PTHR43757:SF2">
    <property type="entry name" value="AMINOMETHYLTRANSFERASE, MITOCHONDRIAL"/>
    <property type="match status" value="1"/>
</dbReference>
<dbReference type="Pfam" id="PF01571">
    <property type="entry name" value="GCV_T"/>
    <property type="match status" value="1"/>
</dbReference>
<dbReference type="Pfam" id="PF08669">
    <property type="entry name" value="GCV_T_C"/>
    <property type="match status" value="1"/>
</dbReference>
<dbReference type="PIRSF" id="PIRSF006487">
    <property type="entry name" value="GcvT"/>
    <property type="match status" value="1"/>
</dbReference>
<dbReference type="SUPFAM" id="SSF101790">
    <property type="entry name" value="Aminomethyltransferase beta-barrel domain"/>
    <property type="match status" value="1"/>
</dbReference>
<dbReference type="SUPFAM" id="SSF103025">
    <property type="entry name" value="Folate-binding domain"/>
    <property type="match status" value="1"/>
</dbReference>
<evidence type="ECO:0000255" key="1">
    <source>
        <dbReference type="HAMAP-Rule" id="MF_00259"/>
    </source>
</evidence>
<sequence>MTAKTPLHTTHLACGAKMVDFHGWDMPLHYGSQLNEHHAVRNDAGMFDVSHMTIVDILGAGGRQFLRKLLTNDVDQITHNGKALYSCMCNEHGGIIDDLIVYQRASDNYRVVLNSATRQNDVAWIRAKSEGFAVGLQERRELSMLAVQGPNAIAKTLSILAPAHVDAVSTLTSFECVDVDHWFFARTGYTGEDGLEIIVPNEFVTQLWNDLLNAGVTPCGLGARDTLRLEAGMLLYGQDMDETTTPLESGLAWTVKWEPEDRGFIGMGALASQKQQGIKRKMVGLTLLDKGIMRHGQKVIIEGCPDGIITSGSYSPTLQQSIALARVPVETGEQVLVDIRGKLIPAKVGKPRFIKQGKPV</sequence>
<organism>
    <name type="scientific">Legionella pneumophila (strain Paris)</name>
    <dbReference type="NCBI Taxonomy" id="297246"/>
    <lineage>
        <taxon>Bacteria</taxon>
        <taxon>Pseudomonadati</taxon>
        <taxon>Pseudomonadota</taxon>
        <taxon>Gammaproteobacteria</taxon>
        <taxon>Legionellales</taxon>
        <taxon>Legionellaceae</taxon>
        <taxon>Legionella</taxon>
    </lineage>
</organism>
<feature type="chain" id="PRO_0000122562" description="Aminomethyltransferase">
    <location>
        <begin position="1"/>
        <end position="360"/>
    </location>
</feature>
<accession>Q5X8W1</accession>
<proteinExistence type="inferred from homology"/>